<reference key="1">
    <citation type="journal article" date="1989" name="AIDS">
        <title>A highly defective HIV-1 strain isolated from a healthy Gabonese individual presenting an atypical western blot.</title>
        <authorList>
            <person name="Huet T."/>
            <person name="Dazza M.C."/>
            <person name="Brun-Vezinet F."/>
            <person name="Roelants G.E."/>
            <person name="Wain-Hobson S."/>
        </authorList>
    </citation>
    <scope>NUCLEOTIDE SEQUENCE [GENOMIC RNA]</scope>
</reference>
<reference key="2">
    <citation type="journal article" date="2004" name="Trends Mol. Med.">
        <title>The viral infectivity factor (Vif) of HIV-1 unveiled.</title>
        <authorList>
            <person name="Rose K.M."/>
            <person name="Marin M."/>
            <person name="Kozak S.L."/>
            <person name="Kabat D."/>
        </authorList>
    </citation>
    <scope>REVIEW</scope>
</reference>
<name>VIF_HV1OY</name>
<gene>
    <name evidence="2" type="primary">vif</name>
</gene>
<comment type="function">
    <text evidence="2">Counteracts the innate antiviral activity of host APOBEC3F and APOBEC3G by promoting their ubiquitination and degradation. Acts as a substrate recognition component of an E3 ubiquitin-protein ligase complex: mechanistically, Vif hijacks a host cullin-5-RING E3 ubiquitin-protein ligase complex (ECS complex) and the transcription coactivator CBFB/CBF-beta to form an active E3 ubiquitin-protein ligase complex that targets APOBEC3G and APOBEC3F for polyubiquitination, leading to their degradation by the proteasome. Vif interaction with APOBEC3G also blocks its cytidine deaminase activity in a proteasome-independent manner, suggesting a dual inhibitory mechanism. May interact directly with APOBEC3G mRNA in order to inhibit its translation. Association with CBFB/CBF-beta also inhibits the transcription coactivator activity of CBFB/CBF-beta. Seems to play a role in viral morphology by affecting the stability of the viral nucleoprotein core. Finally, Vif also contributes to the G2 cell cycle arrest observed in HIV infected cells.</text>
</comment>
<comment type="subunit">
    <text evidence="1">Homomultimer; in vitro and presumably in vivo. Interacts with viral RNA and Pr55Gag precursor; these interactions mediate Vif incorporation into the virion. Interacts with the viral reverse transcriptase. Forms cullin-5-RING E3 ubiquitin-protein ligase complex (ECS complex) by interacting with host CUL5, RBX2, elongin BC complex (ELOB and ELOC) and CBFB/CBF-beta. Within the ECS complex, Vif interacts directly with host CUL5, ELOC and APOBEC (APOBEC3F and APOBEC3G) substrates. The ECS complex also contains some single-stranded RNA (ssRNA) that acts as a glue that bridges Vif with APOBEC (APOBEC3F and APOBEC3G) substrates. Interacts with host UBCE7IP1 isoform 3/ZIN and possibly with SAT. Interacts with host tyrosine kinases HCK and FYN; these interactions may decrease level of phosphorylated APOBEC3G incorporation into virions. Interacts with host ABCE1; this interaction may play a role in protecting viral RNA from damage during viral assembly. Interacts with host MDM2; this interaction targets Vif for degradation by the proteasome.</text>
</comment>
<comment type="subcellular location">
    <subcellularLocation>
        <location evidence="2">Host cytoplasm</location>
    </subcellularLocation>
    <subcellularLocation>
        <location evidence="2">Host cell membrane</location>
        <topology evidence="2">Peripheral membrane protein</topology>
        <orientation evidence="2">Cytoplasmic side</orientation>
    </subcellularLocation>
    <subcellularLocation>
        <location evidence="2">Virion</location>
    </subcellularLocation>
    <text evidence="2">In the cytoplasm, seems to colocalize with intermediate filament vimentin. A fraction is associated with the cytoplasmic side of cellular membranes, presumably via the interaction with Pr55Gag precursor. Incorporated in virions at a ratio of approximately 7 to 20 molecules per virion.</text>
</comment>
<comment type="induction">
    <text evidence="2">Expressed late during infection in a Rev-dependent manner.</text>
</comment>
<comment type="domain">
    <text evidence="2">The BC-like-box motif mediates the interaction with elongin BC complex.</text>
</comment>
<comment type="domain">
    <text evidence="2">The HCCH motif (H-x(5)-C-x(18)-C-x(5)-H) mediates the interaction with CUL5.</text>
</comment>
<comment type="PTM">
    <text evidence="2">Processed in virion by the viral protease.</text>
</comment>
<comment type="PTM">
    <text evidence="2">Highly phosphorylated on serine and threonine residues.</text>
</comment>
<comment type="PTM">
    <text evidence="2">Polyubiquitinated and degraded by the proteasome in the presence of APOBEC3G.</text>
</comment>
<comment type="miscellaneous">
    <text evidence="2">Vif-defective viruses show catastrophic failure in reverse transcription due to APOBEC-induced mutations that initiate a DNA base repair pathway and compromise the structural integrity of the ssDNA. In the absence of Vif, the virion is morphologically abnormal.</text>
</comment>
<comment type="miscellaneous">
    <text evidence="2">HIV-1 lineages are divided in three main groups, M (for Major), O (for Outlier), and N (for New, or Non-M, Non-O). The vast majority of strains found worldwide belong to the group M. Group O seems to be endemic to and largely confined to Cameroon and neighboring countries in West Central Africa, where these viruses represent a small minority of HIV-1 strains. The group N is represented by a limited number of isolates from Cameroonian persons. The group M is further subdivided in 9 clades or subtypes (A to D, F to H, J and K).</text>
</comment>
<comment type="miscellaneous">
    <text evidence="2">Required for replication in 'nonpermissive' cells, including primary T-cells, macrophages and certain T-cell lines, but is dispensable for replication in 'permissive' cell lines, such as 293T cells. In nonpermissive cells, Vif-defective viruses can produce virions, but they fail to complete reverse transcription and cannot successfully infect new cells.</text>
</comment>
<comment type="similarity">
    <text evidence="2">Belongs to the primate lentivirus group Vif protein family.</text>
</comment>
<protein>
    <recommendedName>
        <fullName evidence="2">Virion infectivity factor</fullName>
        <shortName evidence="2">Vif</shortName>
    </recommendedName>
    <alternativeName>
        <fullName evidence="2">SOR protein</fullName>
    </alternativeName>
    <component>
        <recommendedName>
            <fullName evidence="2">p17</fullName>
        </recommendedName>
    </component>
    <component>
        <recommendedName>
            <fullName evidence="2">p7</fullName>
        </recommendedName>
    </component>
</protein>
<dbReference type="EMBL" id="M26727">
    <property type="protein sequence ID" value="AAA83393.1"/>
    <property type="molecule type" value="Genomic_RNA"/>
</dbReference>
<dbReference type="SMR" id="P20890"/>
<dbReference type="Proteomes" id="UP000121275">
    <property type="component" value="Genome"/>
</dbReference>
<dbReference type="GO" id="GO:0030430">
    <property type="term" value="C:host cell cytoplasm"/>
    <property type="evidence" value="ECO:0007669"/>
    <property type="project" value="UniProtKB-SubCell"/>
</dbReference>
<dbReference type="GO" id="GO:0020002">
    <property type="term" value="C:host cell plasma membrane"/>
    <property type="evidence" value="ECO:0007669"/>
    <property type="project" value="UniProtKB-SubCell"/>
</dbReference>
<dbReference type="GO" id="GO:0016020">
    <property type="term" value="C:membrane"/>
    <property type="evidence" value="ECO:0007669"/>
    <property type="project" value="UniProtKB-UniRule"/>
</dbReference>
<dbReference type="GO" id="GO:0044423">
    <property type="term" value="C:virion component"/>
    <property type="evidence" value="ECO:0007669"/>
    <property type="project" value="UniProtKB-UniRule"/>
</dbReference>
<dbReference type="GO" id="GO:0046872">
    <property type="term" value="F:metal ion binding"/>
    <property type="evidence" value="ECO:0007669"/>
    <property type="project" value="UniProtKB-KW"/>
</dbReference>
<dbReference type="GO" id="GO:0003723">
    <property type="term" value="F:RNA binding"/>
    <property type="evidence" value="ECO:0007669"/>
    <property type="project" value="UniProtKB-UniRule"/>
</dbReference>
<dbReference type="GO" id="GO:0019058">
    <property type="term" value="P:viral life cycle"/>
    <property type="evidence" value="ECO:0007669"/>
    <property type="project" value="InterPro"/>
</dbReference>
<dbReference type="HAMAP" id="MF_04081">
    <property type="entry name" value="HIV_VIF"/>
    <property type="match status" value="1"/>
</dbReference>
<dbReference type="InterPro" id="IPR000475">
    <property type="entry name" value="Vif"/>
</dbReference>
<dbReference type="Pfam" id="PF00559">
    <property type="entry name" value="Vif"/>
    <property type="match status" value="1"/>
</dbReference>
<dbReference type="PRINTS" id="PR00349">
    <property type="entry name" value="VIRIONINFFCT"/>
</dbReference>
<organism>
    <name type="scientific">Human immunodeficiency virus type 1 group M subtype B (isolate OYI)</name>
    <name type="common">HIV-1</name>
    <dbReference type="NCBI Taxonomy" id="11699"/>
    <lineage>
        <taxon>Viruses</taxon>
        <taxon>Riboviria</taxon>
        <taxon>Pararnavirae</taxon>
        <taxon>Artverviricota</taxon>
        <taxon>Revtraviricetes</taxon>
        <taxon>Ortervirales</taxon>
        <taxon>Retroviridae</taxon>
        <taxon>Orthoretrovirinae</taxon>
        <taxon>Lentivirus</taxon>
        <taxon>Human immunodeficiency virus type 1</taxon>
    </lineage>
</organism>
<evidence type="ECO:0000250" key="1">
    <source>
        <dbReference type="UniProtKB" id="O70897"/>
    </source>
</evidence>
<evidence type="ECO:0000255" key="2">
    <source>
        <dbReference type="HAMAP-Rule" id="MF_04081"/>
    </source>
</evidence>
<evidence type="ECO:0000256" key="3">
    <source>
        <dbReference type="SAM" id="MobiDB-lite"/>
    </source>
</evidence>
<proteinExistence type="inferred from homology"/>
<sequence length="192" mass="22366">MENRWQVMIVWQVDRMRIRTWKSLVKHHMYVSKKAKGWFYRHHYESTHPRISSEVHIPLGDATLVVTTYWGLHTGEREWHLGQGASIEWRKKRYSTQVDPGLADQLIHTYYFDCFSESAIRNAILGNIVSPRCEYPAGHNKVGSLQYLALAALIKPKKIKPPLPSVTKLTEDRWNKPQKTKGHRGSHTMNGH</sequence>
<organismHost>
    <name type="scientific">Homo sapiens</name>
    <name type="common">Human</name>
    <dbReference type="NCBI Taxonomy" id="9606"/>
</organismHost>
<accession>P20890</accession>
<keyword id="KW-0014">AIDS</keyword>
<keyword id="KW-1032">Host cell membrane</keyword>
<keyword id="KW-1035">Host cytoplasm</keyword>
<keyword id="KW-1043">Host membrane</keyword>
<keyword id="KW-0945">Host-virus interaction</keyword>
<keyword id="KW-0472">Membrane</keyword>
<keyword id="KW-0479">Metal-binding</keyword>
<keyword id="KW-0597">Phosphoprotein</keyword>
<keyword id="KW-0694">RNA-binding</keyword>
<keyword id="KW-0832">Ubl conjugation</keyword>
<keyword id="KW-0833">Ubl conjugation pathway</keyword>
<keyword id="KW-0946">Virion</keyword>
<keyword id="KW-0862">Zinc</keyword>
<feature type="chain" id="PRO_0000043059" description="Virion infectivity factor" evidence="2">
    <location>
        <begin position="1"/>
        <end position="192"/>
    </location>
</feature>
<feature type="chain" id="PRO_0000043060" description="p17" evidence="2">
    <location>
        <begin position="1"/>
        <end position="150"/>
    </location>
</feature>
<feature type="chain" id="PRO_0000043061" description="p7" evidence="2">
    <location>
        <begin position="151"/>
        <end position="192"/>
    </location>
</feature>
<feature type="region of interest" description="Interaction with host APOBEC3F; F1-box" evidence="2">
    <location>
        <begin position="14"/>
        <end position="17"/>
    </location>
</feature>
<feature type="region of interest" description="Interaction with host APOBEC3G; G-box" evidence="2">
    <location>
        <begin position="40"/>
        <end position="44"/>
    </location>
</feature>
<feature type="region of interest" description="Interaction with host APOBEC3F and APOBEC3G; FG-box" evidence="2">
    <location>
        <begin position="54"/>
        <end position="72"/>
    </location>
</feature>
<feature type="region of interest" description="Interaction with host APOBEC3F; F2-box" evidence="2">
    <location>
        <begin position="74"/>
        <end position="79"/>
    </location>
</feature>
<feature type="region of interest" description="RNA-binding" evidence="2">
    <location>
        <begin position="75"/>
        <end position="114"/>
    </location>
</feature>
<feature type="region of interest" description="SOCS box-like" evidence="2">
    <location>
        <begin position="151"/>
        <end position="180"/>
    </location>
</feature>
<feature type="region of interest" description="Multimerization" evidence="2">
    <location>
        <begin position="151"/>
        <end position="164"/>
    </location>
</feature>
<feature type="region of interest" description="Disordered" evidence="3">
    <location>
        <begin position="164"/>
        <end position="192"/>
    </location>
</feature>
<feature type="region of interest" description="Membrane association" evidence="2">
    <location>
        <begin position="171"/>
        <end position="172"/>
    </location>
</feature>
<feature type="short sequence motif" description="HCCH motif" evidence="2">
    <location>
        <begin position="108"/>
        <end position="139"/>
    </location>
</feature>
<feature type="short sequence motif" description="BC-box-like motif" evidence="2">
    <location>
        <begin position="144"/>
        <end position="153"/>
    </location>
</feature>
<feature type="compositionally biased region" description="Basic residues" evidence="3">
    <location>
        <begin position="176"/>
        <end position="186"/>
    </location>
</feature>
<feature type="binding site" evidence="2">
    <location>
        <position position="108"/>
    </location>
    <ligand>
        <name>Zn(2+)</name>
        <dbReference type="ChEBI" id="CHEBI:29105"/>
    </ligand>
</feature>
<feature type="binding site" evidence="2">
    <location>
        <position position="114"/>
    </location>
    <ligand>
        <name>Zn(2+)</name>
        <dbReference type="ChEBI" id="CHEBI:29105"/>
    </ligand>
</feature>
<feature type="binding site" evidence="2">
    <location>
        <position position="133"/>
    </location>
    <ligand>
        <name>Zn(2+)</name>
        <dbReference type="ChEBI" id="CHEBI:29105"/>
    </ligand>
</feature>
<feature type="binding site" evidence="2">
    <location>
        <position position="139"/>
    </location>
    <ligand>
        <name>Zn(2+)</name>
        <dbReference type="ChEBI" id="CHEBI:29105"/>
    </ligand>
</feature>
<feature type="site" description="Cleavage in virion (by viral protease)" evidence="2">
    <location>
        <begin position="150"/>
        <end position="151"/>
    </location>
</feature>
<feature type="modified residue" description="Phosphothreonine; by host MAP4K1" evidence="2">
    <location>
        <position position="96"/>
    </location>
</feature>
<feature type="modified residue" description="Phosphoserine; by host" evidence="2">
    <location>
        <position position="144"/>
    </location>
</feature>
<feature type="modified residue" description="Phosphoserine; by host MAP4K1" evidence="2">
    <location>
        <position position="165"/>
    </location>
</feature>
<feature type="modified residue" description="Phosphothreonine; by host" evidence="2">
    <location>
        <position position="188"/>
    </location>
</feature>